<feature type="chain" id="PRO_1000090966" description="Aspartate--tRNA(Asp/Asn) ligase">
    <location>
        <begin position="1"/>
        <end position="595"/>
    </location>
</feature>
<feature type="region of interest" description="Aspartate" evidence="1">
    <location>
        <begin position="199"/>
        <end position="202"/>
    </location>
</feature>
<feature type="binding site" evidence="1">
    <location>
        <position position="175"/>
    </location>
    <ligand>
        <name>L-aspartate</name>
        <dbReference type="ChEBI" id="CHEBI:29991"/>
    </ligand>
</feature>
<feature type="binding site" evidence="1">
    <location>
        <begin position="221"/>
        <end position="223"/>
    </location>
    <ligand>
        <name>ATP</name>
        <dbReference type="ChEBI" id="CHEBI:30616"/>
    </ligand>
</feature>
<feature type="binding site" evidence="1">
    <location>
        <position position="221"/>
    </location>
    <ligand>
        <name>L-aspartate</name>
        <dbReference type="ChEBI" id="CHEBI:29991"/>
    </ligand>
</feature>
<feature type="binding site" evidence="1">
    <location>
        <position position="454"/>
    </location>
    <ligand>
        <name>L-aspartate</name>
        <dbReference type="ChEBI" id="CHEBI:29991"/>
    </ligand>
</feature>
<feature type="binding site" evidence="1">
    <location>
        <position position="488"/>
    </location>
    <ligand>
        <name>ATP</name>
        <dbReference type="ChEBI" id="CHEBI:30616"/>
    </ligand>
</feature>
<feature type="binding site" evidence="1">
    <location>
        <position position="495"/>
    </location>
    <ligand>
        <name>L-aspartate</name>
        <dbReference type="ChEBI" id="CHEBI:29991"/>
    </ligand>
</feature>
<feature type="binding site" evidence="1">
    <location>
        <begin position="540"/>
        <end position="543"/>
    </location>
    <ligand>
        <name>ATP</name>
        <dbReference type="ChEBI" id="CHEBI:30616"/>
    </ligand>
</feature>
<feature type="site" description="Important for tRNA non-discrimination" evidence="1">
    <location>
        <position position="33"/>
    </location>
</feature>
<reference key="1">
    <citation type="journal article" date="2008" name="PLoS ONE">
        <title>Genome sequence of Brucella abortus vaccine strain S19 compared to virulent strains yields candidate virulence genes.</title>
        <authorList>
            <person name="Crasta O.R."/>
            <person name="Folkerts O."/>
            <person name="Fei Z."/>
            <person name="Mane S.P."/>
            <person name="Evans C."/>
            <person name="Martino-Catt S."/>
            <person name="Bricker B."/>
            <person name="Yu G."/>
            <person name="Du L."/>
            <person name="Sobral B.W."/>
        </authorList>
    </citation>
    <scope>NUCLEOTIDE SEQUENCE [LARGE SCALE GENOMIC DNA]</scope>
    <source>
        <strain>S19</strain>
    </source>
</reference>
<organism>
    <name type="scientific">Brucella abortus (strain S19)</name>
    <dbReference type="NCBI Taxonomy" id="430066"/>
    <lineage>
        <taxon>Bacteria</taxon>
        <taxon>Pseudomonadati</taxon>
        <taxon>Pseudomonadota</taxon>
        <taxon>Alphaproteobacteria</taxon>
        <taxon>Hyphomicrobiales</taxon>
        <taxon>Brucellaceae</taxon>
        <taxon>Brucella/Ochrobactrum group</taxon>
        <taxon>Brucella</taxon>
    </lineage>
</organism>
<protein>
    <recommendedName>
        <fullName evidence="1">Aspartate--tRNA(Asp/Asn) ligase</fullName>
        <ecNumber evidence="1">6.1.1.23</ecNumber>
    </recommendedName>
    <alternativeName>
        <fullName evidence="1">Aspartyl-tRNA synthetase</fullName>
        <shortName evidence="1">AspRS</shortName>
    </alternativeName>
    <alternativeName>
        <fullName evidence="1">Non-discriminating aspartyl-tRNA synthetase</fullName>
        <shortName evidence="1">ND-AspRS</shortName>
    </alternativeName>
</protein>
<name>SYDND_BRUA1</name>
<keyword id="KW-0030">Aminoacyl-tRNA synthetase</keyword>
<keyword id="KW-0067">ATP-binding</keyword>
<keyword id="KW-0963">Cytoplasm</keyword>
<keyword id="KW-0436">Ligase</keyword>
<keyword id="KW-0547">Nucleotide-binding</keyword>
<keyword id="KW-0648">Protein biosynthesis</keyword>
<dbReference type="EC" id="6.1.1.23" evidence="1"/>
<dbReference type="EMBL" id="CP000887">
    <property type="protein sequence ID" value="ACD72248.1"/>
    <property type="molecule type" value="Genomic_DNA"/>
</dbReference>
<dbReference type="RefSeq" id="WP_002963890.1">
    <property type="nucleotide sequence ID" value="NC_010742.1"/>
</dbReference>
<dbReference type="SMR" id="B2S501"/>
<dbReference type="GeneID" id="93016855"/>
<dbReference type="KEGG" id="bmc:BAbS19_I07240"/>
<dbReference type="HOGENOM" id="CLU_014330_3_2_5"/>
<dbReference type="Proteomes" id="UP000002565">
    <property type="component" value="Chromosome 1"/>
</dbReference>
<dbReference type="GO" id="GO:0005737">
    <property type="term" value="C:cytoplasm"/>
    <property type="evidence" value="ECO:0007669"/>
    <property type="project" value="UniProtKB-SubCell"/>
</dbReference>
<dbReference type="GO" id="GO:0004815">
    <property type="term" value="F:aspartate-tRNA ligase activity"/>
    <property type="evidence" value="ECO:0007669"/>
    <property type="project" value="UniProtKB-UniRule"/>
</dbReference>
<dbReference type="GO" id="GO:0050560">
    <property type="term" value="F:aspartate-tRNA(Asn) ligase activity"/>
    <property type="evidence" value="ECO:0007669"/>
    <property type="project" value="UniProtKB-EC"/>
</dbReference>
<dbReference type="GO" id="GO:0005524">
    <property type="term" value="F:ATP binding"/>
    <property type="evidence" value="ECO:0007669"/>
    <property type="project" value="UniProtKB-UniRule"/>
</dbReference>
<dbReference type="GO" id="GO:0003676">
    <property type="term" value="F:nucleic acid binding"/>
    <property type="evidence" value="ECO:0007669"/>
    <property type="project" value="InterPro"/>
</dbReference>
<dbReference type="GO" id="GO:0006422">
    <property type="term" value="P:aspartyl-tRNA aminoacylation"/>
    <property type="evidence" value="ECO:0007669"/>
    <property type="project" value="UniProtKB-UniRule"/>
</dbReference>
<dbReference type="CDD" id="cd00777">
    <property type="entry name" value="AspRS_core"/>
    <property type="match status" value="1"/>
</dbReference>
<dbReference type="CDD" id="cd04317">
    <property type="entry name" value="EcAspRS_like_N"/>
    <property type="match status" value="1"/>
</dbReference>
<dbReference type="Gene3D" id="3.30.930.10">
    <property type="entry name" value="Bira Bifunctional Protein, Domain 2"/>
    <property type="match status" value="1"/>
</dbReference>
<dbReference type="Gene3D" id="3.30.1360.30">
    <property type="entry name" value="GAD-like domain"/>
    <property type="match status" value="1"/>
</dbReference>
<dbReference type="Gene3D" id="2.40.50.140">
    <property type="entry name" value="Nucleic acid-binding proteins"/>
    <property type="match status" value="1"/>
</dbReference>
<dbReference type="HAMAP" id="MF_00044">
    <property type="entry name" value="Asp_tRNA_synth_type1"/>
    <property type="match status" value="1"/>
</dbReference>
<dbReference type="InterPro" id="IPR004364">
    <property type="entry name" value="Aa-tRNA-synt_II"/>
</dbReference>
<dbReference type="InterPro" id="IPR006195">
    <property type="entry name" value="aa-tRNA-synth_II"/>
</dbReference>
<dbReference type="InterPro" id="IPR045864">
    <property type="entry name" value="aa-tRNA-synth_II/BPL/LPL"/>
</dbReference>
<dbReference type="InterPro" id="IPR004524">
    <property type="entry name" value="Asp-tRNA-ligase_1"/>
</dbReference>
<dbReference type="InterPro" id="IPR047089">
    <property type="entry name" value="Asp-tRNA-ligase_1_N"/>
</dbReference>
<dbReference type="InterPro" id="IPR002312">
    <property type="entry name" value="Asp/Asn-tRNA-synth_IIb"/>
</dbReference>
<dbReference type="InterPro" id="IPR047090">
    <property type="entry name" value="AspRS_core"/>
</dbReference>
<dbReference type="InterPro" id="IPR004115">
    <property type="entry name" value="GAD-like_sf"/>
</dbReference>
<dbReference type="InterPro" id="IPR029351">
    <property type="entry name" value="GAD_dom"/>
</dbReference>
<dbReference type="InterPro" id="IPR012340">
    <property type="entry name" value="NA-bd_OB-fold"/>
</dbReference>
<dbReference type="InterPro" id="IPR004365">
    <property type="entry name" value="NA-bd_OB_tRNA"/>
</dbReference>
<dbReference type="NCBIfam" id="TIGR00459">
    <property type="entry name" value="aspS_bact"/>
    <property type="match status" value="1"/>
</dbReference>
<dbReference type="NCBIfam" id="NF001750">
    <property type="entry name" value="PRK00476.1"/>
    <property type="match status" value="1"/>
</dbReference>
<dbReference type="PANTHER" id="PTHR22594:SF5">
    <property type="entry name" value="ASPARTATE--TRNA LIGASE, MITOCHONDRIAL"/>
    <property type="match status" value="1"/>
</dbReference>
<dbReference type="PANTHER" id="PTHR22594">
    <property type="entry name" value="ASPARTYL/LYSYL-TRNA SYNTHETASE"/>
    <property type="match status" value="1"/>
</dbReference>
<dbReference type="Pfam" id="PF02938">
    <property type="entry name" value="GAD"/>
    <property type="match status" value="1"/>
</dbReference>
<dbReference type="Pfam" id="PF00152">
    <property type="entry name" value="tRNA-synt_2"/>
    <property type="match status" value="1"/>
</dbReference>
<dbReference type="Pfam" id="PF01336">
    <property type="entry name" value="tRNA_anti-codon"/>
    <property type="match status" value="1"/>
</dbReference>
<dbReference type="PRINTS" id="PR01042">
    <property type="entry name" value="TRNASYNTHASP"/>
</dbReference>
<dbReference type="SUPFAM" id="SSF55681">
    <property type="entry name" value="Class II aaRS and biotin synthetases"/>
    <property type="match status" value="1"/>
</dbReference>
<dbReference type="SUPFAM" id="SSF55261">
    <property type="entry name" value="GAD domain-like"/>
    <property type="match status" value="1"/>
</dbReference>
<dbReference type="SUPFAM" id="SSF50249">
    <property type="entry name" value="Nucleic acid-binding proteins"/>
    <property type="match status" value="1"/>
</dbReference>
<dbReference type="PROSITE" id="PS50862">
    <property type="entry name" value="AA_TRNA_LIGASE_II"/>
    <property type="match status" value="1"/>
</dbReference>
<sequence length="595" mass="67255">MHRYRSHTCAALRKTDVGSNVRLSGWVHRVRDHGGILFIDLRDHYGITQIVADPDSPAFKVAETVRGEWVIRVDGEVKARADDAVNTNLPTGEVEIFATEIEVLSPAKELPLPVFGEPDYPEDIRLKYRFLDLRRETLHKNIMSRTKIIAAMRRRMTEIGFNEFSTPILTASSPEGARDFLVPSRIHPGKFYALPQAPQQYKQLLMVAGFDRYFQIAPCFRDEDPRADRLPGEFYQLDLEMSFVTQEEVWETMEPVMRGIFEEFAEGKPVTKVFRRIAYDDAIRTYGSDKPDLRNPIEMQAVTDHFAGSGFKVFANMIANDAKVEVWAIPAKTGGSRAFCDRMNSWAQSEGQPGLGYIFWRKEGDKLEGAGPIAKNIGEERTEAIRKQMGLEDGDACFFVAGLPSKFYKFAGDARTRAGEELNLVDRDRFELAWIIDFPFYEWDEDNKKIDFAHNPFSLPQGGMDALENMDPLEIKAYQYDLVCNGFEIASGSIRNQLPEVMVKAFEKVGLSQQDVEERFGGLYRAFQYGAPPHGGMAAGIDRVIMLLVGAKNLREISLFPMNQQALDLLMGAPSEVSPAQLRDLHVRLAPVQKS</sequence>
<gene>
    <name evidence="1" type="primary">aspS</name>
    <name type="ordered locus">BAbS19_I07240</name>
</gene>
<proteinExistence type="inferred from homology"/>
<evidence type="ECO:0000255" key="1">
    <source>
        <dbReference type="HAMAP-Rule" id="MF_00044"/>
    </source>
</evidence>
<comment type="function">
    <text evidence="1">Aspartyl-tRNA synthetase with relaxed tRNA specificity since it is able to aspartylate not only its cognate tRNA(Asp) but also tRNA(Asn). Reaction proceeds in two steps: L-aspartate is first activated by ATP to form Asp-AMP and then transferred to the acceptor end of tRNA(Asp/Asn).</text>
</comment>
<comment type="catalytic activity">
    <reaction evidence="1">
        <text>tRNA(Asx) + L-aspartate + ATP = L-aspartyl-tRNA(Asx) + AMP + diphosphate</text>
        <dbReference type="Rhea" id="RHEA:18349"/>
        <dbReference type="Rhea" id="RHEA-COMP:9710"/>
        <dbReference type="Rhea" id="RHEA-COMP:9711"/>
        <dbReference type="ChEBI" id="CHEBI:29991"/>
        <dbReference type="ChEBI" id="CHEBI:30616"/>
        <dbReference type="ChEBI" id="CHEBI:33019"/>
        <dbReference type="ChEBI" id="CHEBI:78442"/>
        <dbReference type="ChEBI" id="CHEBI:78516"/>
        <dbReference type="ChEBI" id="CHEBI:456215"/>
        <dbReference type="EC" id="6.1.1.23"/>
    </reaction>
</comment>
<comment type="subunit">
    <text evidence="1">Homodimer.</text>
</comment>
<comment type="subcellular location">
    <subcellularLocation>
        <location evidence="1">Cytoplasm</location>
    </subcellularLocation>
</comment>
<comment type="similarity">
    <text evidence="1">Belongs to the class-II aminoacyl-tRNA synthetase family. Type 1 subfamily.</text>
</comment>
<accession>B2S501</accession>